<sequence length="296" mass="34168">MLHLRSSQMLQMLESSLRKYLPESLKVYGTVFHMNQGNPFKLKALVDKWPDFNTVVVRPREQEMGDDLDQHTNTYQIYSKDPKHCLEFLGTPDVINWKQHLQIQSSQSNLNEAIMDLAAGKMVKVKRTQCILYMMPETAKKLVPSLLEDKEYLDHQSGRPRAIDQEMFKLSTLDVTHAPLVDKFWQFGGNERSQRFIGRCIQIFPSSCLLGPEGTPVSWALMDQTGEIRMAGTVPDYRAQGLISHIIYAQTLAMDKRGYPVYNHTEQTNKVIQKMSHTLHHVPMPCDWNQWYCAPL</sequence>
<name>GLYAL_MOUSE</name>
<reference key="1">
    <citation type="journal article" date="2009" name="PLoS Biol.">
        <title>Lineage-specific biology revealed by a finished genome assembly of the mouse.</title>
        <authorList>
            <person name="Church D.M."/>
            <person name="Goodstadt L."/>
            <person name="Hillier L.W."/>
            <person name="Zody M.C."/>
            <person name="Goldstein S."/>
            <person name="She X."/>
            <person name="Bult C.J."/>
            <person name="Agarwala R."/>
            <person name="Cherry J.L."/>
            <person name="DiCuccio M."/>
            <person name="Hlavina W."/>
            <person name="Kapustin Y."/>
            <person name="Meric P."/>
            <person name="Maglott D."/>
            <person name="Birtle Z."/>
            <person name="Marques A.C."/>
            <person name="Graves T."/>
            <person name="Zhou S."/>
            <person name="Teague B."/>
            <person name="Potamousis K."/>
            <person name="Churas C."/>
            <person name="Place M."/>
            <person name="Herschleb J."/>
            <person name="Runnheim R."/>
            <person name="Forrest D."/>
            <person name="Amos-Landgraf J."/>
            <person name="Schwartz D.C."/>
            <person name="Cheng Z."/>
            <person name="Lindblad-Toh K."/>
            <person name="Eichler E.E."/>
            <person name="Ponting C.P."/>
        </authorList>
    </citation>
    <scope>NUCLEOTIDE SEQUENCE [LARGE SCALE GENOMIC DNA]</scope>
    <source>
        <strain>C57BL/6J</strain>
    </source>
</reference>
<reference key="2">
    <citation type="journal article" date="2004" name="Genome Res.">
        <title>The status, quality, and expansion of the NIH full-length cDNA project: the Mammalian Gene Collection (MGC).</title>
        <authorList>
            <consortium name="The MGC Project Team"/>
        </authorList>
    </citation>
    <scope>NUCLEOTIDE SEQUENCE [LARGE SCALE MRNA]</scope>
    <source>
        <tissue>Liver</tissue>
    </source>
</reference>
<reference key="3">
    <citation type="journal article" date="2013" name="Mol. Cell">
        <title>SIRT5-mediated lysine desuccinylation impacts diverse metabolic pathways.</title>
        <authorList>
            <person name="Park J."/>
            <person name="Chen Y."/>
            <person name="Tishkoff D.X."/>
            <person name="Peng C."/>
            <person name="Tan M."/>
            <person name="Dai L."/>
            <person name="Xie Z."/>
            <person name="Zhang Y."/>
            <person name="Zwaans B.M."/>
            <person name="Skinner M.E."/>
            <person name="Lombard D.B."/>
            <person name="Zhao Y."/>
        </authorList>
    </citation>
    <scope>SUCCINYLATION [LARGE SCALE ANALYSIS] AT LYS-41; LYS-48; LYS-183 AND LYS-256</scope>
    <scope>IDENTIFICATION BY MASS SPECTROMETRY [LARGE SCALE ANALYSIS]</scope>
    <source>
        <tissue>Liver</tissue>
    </source>
</reference>
<reference key="4">
    <citation type="journal article" date="2013" name="Proc. Natl. Acad. Sci. U.S.A.">
        <title>Label-free quantitative proteomics of the lysine acetylome in mitochondria identifies substrates of SIRT3 in metabolic pathways.</title>
        <authorList>
            <person name="Rardin M.J."/>
            <person name="Newman J.C."/>
            <person name="Held J.M."/>
            <person name="Cusack M.P."/>
            <person name="Sorensen D.J."/>
            <person name="Li B."/>
            <person name="Schilling B."/>
            <person name="Mooney S.D."/>
            <person name="Kahn C.R."/>
            <person name="Verdin E."/>
            <person name="Gibson B.W."/>
        </authorList>
    </citation>
    <scope>ACETYLATION [LARGE SCALE ANALYSIS] AT LYS-41; LYS-43; LYS-48; LYS-80; LYS-83; LYS-183 AND LYS-256</scope>
    <scope>IDENTIFICATION BY MASS SPECTROMETRY [LARGE SCALE ANALYSIS]</scope>
    <source>
        <tissue>Liver</tissue>
    </source>
</reference>
<comment type="function">
    <text evidence="1">Mitochondrial acyltransferase which transfers the acyl group to the N-terminus of glycine. Can conjugate a multitude of substrates to form a variety of N-acylglycines (By similarity).</text>
</comment>
<comment type="catalytic activity">
    <reaction>
        <text>an acyl-CoA + glycine = an N-acylglycine + CoA + H(+)</text>
        <dbReference type="Rhea" id="RHEA:19869"/>
        <dbReference type="ChEBI" id="CHEBI:15378"/>
        <dbReference type="ChEBI" id="CHEBI:57287"/>
        <dbReference type="ChEBI" id="CHEBI:57305"/>
        <dbReference type="ChEBI" id="CHEBI:57670"/>
        <dbReference type="ChEBI" id="CHEBI:58342"/>
        <dbReference type="EC" id="2.3.1.13"/>
    </reaction>
</comment>
<comment type="subcellular location">
    <subcellularLocation>
        <location evidence="1">Mitochondrion</location>
    </subcellularLocation>
</comment>
<comment type="similarity">
    <text evidence="2">Belongs to the glycine N-acyltransferase family.</text>
</comment>
<comment type="sequence caution" evidence="2">
    <conflict type="erroneous termination">
        <sequence resource="EMBL-CDS" id="AAH89619"/>
    </conflict>
    <text>Truncated C-terminus.</text>
</comment>
<organism>
    <name type="scientific">Mus musculus</name>
    <name type="common">Mouse</name>
    <dbReference type="NCBI Taxonomy" id="10090"/>
    <lineage>
        <taxon>Eukaryota</taxon>
        <taxon>Metazoa</taxon>
        <taxon>Chordata</taxon>
        <taxon>Craniata</taxon>
        <taxon>Vertebrata</taxon>
        <taxon>Euteleostomi</taxon>
        <taxon>Mammalia</taxon>
        <taxon>Eutheria</taxon>
        <taxon>Euarchontoglires</taxon>
        <taxon>Glires</taxon>
        <taxon>Rodentia</taxon>
        <taxon>Myomorpha</taxon>
        <taxon>Muroidea</taxon>
        <taxon>Muridae</taxon>
        <taxon>Murinae</taxon>
        <taxon>Mus</taxon>
        <taxon>Mus</taxon>
    </lineage>
</organism>
<evidence type="ECO:0000250" key="1"/>
<evidence type="ECO:0000305" key="2"/>
<evidence type="ECO:0007744" key="3">
    <source>
    </source>
</evidence>
<evidence type="ECO:0007744" key="4">
    <source>
    </source>
</evidence>
<keyword id="KW-0007">Acetylation</keyword>
<keyword id="KW-0012">Acyltransferase</keyword>
<keyword id="KW-0496">Mitochondrion</keyword>
<keyword id="KW-1185">Reference proteome</keyword>
<keyword id="KW-0808">Transferase</keyword>
<protein>
    <recommendedName>
        <fullName>Glycine N-acyltransferase-like protein</fullName>
        <ecNumber>2.3.1.13</ecNumber>
    </recommendedName>
    <alternativeName>
        <fullName>Acyl-CoA:glycine N-acyltransferase-like</fullName>
        <shortName>AAc-like</shortName>
    </alternativeName>
</protein>
<feature type="chain" id="PRO_0000281878" description="Glycine N-acyltransferase-like protein">
    <location>
        <begin position="1"/>
        <end position="296"/>
    </location>
</feature>
<feature type="modified residue" description="N6-acetyllysine; alternate" evidence="3">
    <location>
        <position position="41"/>
    </location>
</feature>
<feature type="modified residue" description="N6-succinyllysine; alternate" evidence="4">
    <location>
        <position position="41"/>
    </location>
</feature>
<feature type="modified residue" description="N6-acetyllysine" evidence="3">
    <location>
        <position position="43"/>
    </location>
</feature>
<feature type="modified residue" description="N6-acetyllysine; alternate" evidence="3">
    <location>
        <position position="48"/>
    </location>
</feature>
<feature type="modified residue" description="N6-succinyllysine; alternate" evidence="4">
    <location>
        <position position="48"/>
    </location>
</feature>
<feature type="modified residue" description="N6-acetyllysine" evidence="3">
    <location>
        <position position="80"/>
    </location>
</feature>
<feature type="modified residue" description="N6-acetyllysine" evidence="3">
    <location>
        <position position="83"/>
    </location>
</feature>
<feature type="modified residue" description="N6-acetyllysine; alternate" evidence="3">
    <location>
        <position position="183"/>
    </location>
</feature>
<feature type="modified residue" description="N6-succinyllysine; alternate" evidence="4">
    <location>
        <position position="183"/>
    </location>
</feature>
<feature type="modified residue" description="N6-acetyllysine; alternate" evidence="3">
    <location>
        <position position="256"/>
    </location>
</feature>
<feature type="modified residue" description="N6-succinyllysine; alternate" evidence="4">
    <location>
        <position position="256"/>
    </location>
</feature>
<feature type="sequence conflict" description="In Ref. 1; AAH89619." evidence="2" ref="1">
    <original>Y</original>
    <variation>C</variation>
    <location>
        <position position="152"/>
    </location>
</feature>
<dbReference type="EC" id="2.3.1.13"/>
<dbReference type="EMBL" id="AC129014">
    <property type="status" value="NOT_ANNOTATED_CDS"/>
    <property type="molecule type" value="Genomic_DNA"/>
</dbReference>
<dbReference type="EMBL" id="BC089619">
    <property type="protein sequence ID" value="AAH89619.1"/>
    <property type="status" value="ALT_SEQ"/>
    <property type="molecule type" value="mRNA"/>
</dbReference>
<dbReference type="CCDS" id="CCDS50398.1"/>
<dbReference type="RefSeq" id="NP_001013784.2">
    <property type="nucleotide sequence ID" value="NM_001013762.2"/>
</dbReference>
<dbReference type="RefSeq" id="NP_001161379.1">
    <property type="nucleotide sequence ID" value="NM_001167907.1"/>
</dbReference>
<dbReference type="SMR" id="Q5FW57"/>
<dbReference type="FunCoup" id="Q5FW57">
    <property type="interactions" value="181"/>
</dbReference>
<dbReference type="STRING" id="10090.ENSMUSP00000090607"/>
<dbReference type="iPTMnet" id="Q5FW57"/>
<dbReference type="PhosphoSitePlus" id="Q5FW57"/>
<dbReference type="SwissPalm" id="Q5FW57"/>
<dbReference type="jPOST" id="Q5FW57"/>
<dbReference type="PaxDb" id="10090-ENSMUSP00000090607"/>
<dbReference type="PeptideAtlas" id="Q5FW57"/>
<dbReference type="ProteomicsDB" id="271236"/>
<dbReference type="DNASU" id="240549"/>
<dbReference type="Ensembl" id="ENSMUST00000092931.7">
    <property type="protein sequence ID" value="ENSMUSP00000090607.6"/>
    <property type="gene ID" value="ENSMUSG00000071633.12"/>
</dbReference>
<dbReference type="GeneID" id="240549"/>
<dbReference type="KEGG" id="mmu:240549"/>
<dbReference type="UCSC" id="uc008gug.2">
    <property type="organism name" value="mouse"/>
</dbReference>
<dbReference type="AGR" id="MGI:3643569"/>
<dbReference type="MGI" id="MGI:3643569">
    <property type="gene designation" value="Gm4952"/>
</dbReference>
<dbReference type="VEuPathDB" id="HostDB:ENSMUSG00000071633"/>
<dbReference type="eggNOG" id="ENOG502SDQB">
    <property type="taxonomic scope" value="Eukaryota"/>
</dbReference>
<dbReference type="GeneTree" id="ENSGT00950000183133"/>
<dbReference type="InParanoid" id="Q5FW57"/>
<dbReference type="OMA" id="QTHICHT"/>
<dbReference type="OrthoDB" id="61870at2759"/>
<dbReference type="PhylomeDB" id="Q5FW57"/>
<dbReference type="TreeFam" id="TF353258"/>
<dbReference type="BioGRID-ORCS" id="240549">
    <property type="hits" value="1 hit in 70 CRISPR screens"/>
</dbReference>
<dbReference type="ChiTaRS" id="Gm4952">
    <property type="organism name" value="mouse"/>
</dbReference>
<dbReference type="PRO" id="PR:Q5FW57"/>
<dbReference type="Proteomes" id="UP000000589">
    <property type="component" value="Chromosome 19"/>
</dbReference>
<dbReference type="RNAct" id="Q5FW57">
    <property type="molecule type" value="protein"/>
</dbReference>
<dbReference type="Bgee" id="ENSMUSG00000071633">
    <property type="expression patterns" value="Expressed in liver and 21 other cell types or tissues"/>
</dbReference>
<dbReference type="ExpressionAtlas" id="Q5FW57">
    <property type="expression patterns" value="baseline and differential"/>
</dbReference>
<dbReference type="GO" id="GO:0005739">
    <property type="term" value="C:mitochondrion"/>
    <property type="evidence" value="ECO:0007005"/>
    <property type="project" value="MGI"/>
</dbReference>
<dbReference type="GO" id="GO:0047961">
    <property type="term" value="F:glycine N-acyltransferase activity"/>
    <property type="evidence" value="ECO:0007669"/>
    <property type="project" value="UniProtKB-EC"/>
</dbReference>
<dbReference type="FunFam" id="3.40.630.30:FF:000075">
    <property type="entry name" value="Glycine N-acyltransferase"/>
    <property type="match status" value="1"/>
</dbReference>
<dbReference type="Gene3D" id="3.40.630.30">
    <property type="match status" value="1"/>
</dbReference>
<dbReference type="InterPro" id="IPR016181">
    <property type="entry name" value="Acyl_CoA_acyltransferase"/>
</dbReference>
<dbReference type="InterPro" id="IPR010313">
    <property type="entry name" value="Glycine_N-acyltransferase"/>
</dbReference>
<dbReference type="InterPro" id="IPR013652">
    <property type="entry name" value="Glycine_N-acyltransferase_C"/>
</dbReference>
<dbReference type="InterPro" id="IPR015938">
    <property type="entry name" value="Glycine_N-acyltransferase_N"/>
</dbReference>
<dbReference type="PANTHER" id="PTHR15298:SF11">
    <property type="entry name" value="GLYCINE N-ACYLTRANSFERASE-LIKE PROTEIN"/>
    <property type="match status" value="1"/>
</dbReference>
<dbReference type="PANTHER" id="PTHR15298">
    <property type="entry name" value="L-COA N-ACYLTRANSFERASE-RELATED"/>
    <property type="match status" value="1"/>
</dbReference>
<dbReference type="Pfam" id="PF08444">
    <property type="entry name" value="Gly_acyl_tr_C"/>
    <property type="match status" value="1"/>
</dbReference>
<dbReference type="Pfam" id="PF06021">
    <property type="entry name" value="Gly_acyl_tr_N"/>
    <property type="match status" value="1"/>
</dbReference>
<dbReference type="SUPFAM" id="SSF55729">
    <property type="entry name" value="Acyl-CoA N-acyltransferases (Nat)"/>
    <property type="match status" value="1"/>
</dbReference>
<accession>Q5FW57</accession>
<accession>E9QNP7</accession>
<proteinExistence type="evidence at protein level"/>
<gene>
    <name type="primary">Gm4952</name>
</gene>